<name>Y4929_PARS2</name>
<evidence type="ECO:0000250" key="1"/>
<evidence type="ECO:0000256" key="2">
    <source>
        <dbReference type="SAM" id="MobiDB-lite"/>
    </source>
</evidence>
<evidence type="ECO:0000305" key="3"/>
<comment type="function">
    <text evidence="1">Exhibits S-adenosyl-L-methionine-dependent methyltransferase activity.</text>
</comment>
<comment type="similarity">
    <text evidence="3">Belongs to the UPF0677 family.</text>
</comment>
<comment type="sequence caution" evidence="3">
    <conflict type="frameshift">
        <sequence resource="EMBL-CDS" id="ABW14294"/>
    </conflict>
</comment>
<organism>
    <name type="scientific">Parafrankia sp. (strain EAN1pec)</name>
    <dbReference type="NCBI Taxonomy" id="298653"/>
    <lineage>
        <taxon>Bacteria</taxon>
        <taxon>Bacillati</taxon>
        <taxon>Actinomycetota</taxon>
        <taxon>Actinomycetes</taxon>
        <taxon>Frankiales</taxon>
        <taxon>Frankiaceae</taxon>
        <taxon>Parafrankia</taxon>
    </lineage>
</organism>
<sequence>MSRPSAPRGRTELRSIHERGHERGSAGVGRTALATAWIRAGESERPDRLFDDWLAPAFVAAAGDALPLIPPDAGGRLGALAEMMNAYLAVRTRFFDDELLAAAEAGVRQVVLLAAGLDSRAFRLPWPAGTRLFEVDRPDILAFKEQVLAAGETGPRCERHAVSADLTEDWADEILDAGFRPAEPTAWLAEGIIVYLSAEEAERLLTDVTRLSAPGSRLALEDAKGLAEEMVEEARNIPPLGEFADLWKGGLEGASPAWLGDHGWRGREIDSTTVATELRRPIPAEMPVAGYFVTAQRAVGERAEGERAEG</sequence>
<accession>A8LHA4</accession>
<gene>
    <name type="ordered locus">Franean1_4929</name>
</gene>
<protein>
    <recommendedName>
        <fullName>Putative S-adenosyl-L-methionine-dependent methyltransferase Franean1_4929</fullName>
        <ecNumber>2.1.1.-</ecNumber>
    </recommendedName>
</protein>
<reference key="1">
    <citation type="journal article" date="2007" name="Genome Res.">
        <title>Genome characteristics of facultatively symbiotic Frankia sp. strains reflect host range and host plant biogeography.</title>
        <authorList>
            <person name="Normand P."/>
            <person name="Lapierre P."/>
            <person name="Tisa L.S."/>
            <person name="Gogarten J.P."/>
            <person name="Alloisio N."/>
            <person name="Bagnarol E."/>
            <person name="Bassi C.A."/>
            <person name="Berry A.M."/>
            <person name="Bickhart D.M."/>
            <person name="Choisne N."/>
            <person name="Couloux A."/>
            <person name="Cournoyer B."/>
            <person name="Cruveiller S."/>
            <person name="Daubin V."/>
            <person name="Demange N."/>
            <person name="Francino M.P."/>
            <person name="Goltsman E."/>
            <person name="Huang Y."/>
            <person name="Kopp O.R."/>
            <person name="Labarre L."/>
            <person name="Lapidus A."/>
            <person name="Lavire C."/>
            <person name="Marechal J."/>
            <person name="Martinez M."/>
            <person name="Mastronunzio J.E."/>
            <person name="Mullin B.C."/>
            <person name="Niemann J."/>
            <person name="Pujic P."/>
            <person name="Rawnsley T."/>
            <person name="Rouy Z."/>
            <person name="Schenowitz C."/>
            <person name="Sellstedt A."/>
            <person name="Tavares F."/>
            <person name="Tomkins J.P."/>
            <person name="Vallenet D."/>
            <person name="Valverde C."/>
            <person name="Wall L.G."/>
            <person name="Wang Y."/>
            <person name="Medigue C."/>
            <person name="Benson D.R."/>
        </authorList>
    </citation>
    <scope>NUCLEOTIDE SEQUENCE [LARGE SCALE GENOMIC DNA]</scope>
    <source>
        <strain>EAN1pec</strain>
    </source>
</reference>
<feature type="chain" id="PRO_0000361099" description="Putative S-adenosyl-L-methionine-dependent methyltransferase Franean1_4929">
    <location>
        <begin position="1"/>
        <end position="310"/>
    </location>
</feature>
<feature type="region of interest" description="Disordered" evidence="2">
    <location>
        <begin position="1"/>
        <end position="28"/>
    </location>
</feature>
<feature type="compositionally biased region" description="Basic and acidic residues" evidence="2">
    <location>
        <begin position="9"/>
        <end position="24"/>
    </location>
</feature>
<feature type="binding site" evidence="1">
    <location>
        <position position="136"/>
    </location>
    <ligand>
        <name>S-adenosyl-L-methionine</name>
        <dbReference type="ChEBI" id="CHEBI:59789"/>
    </ligand>
</feature>
<feature type="binding site" evidence="1">
    <location>
        <begin position="165"/>
        <end position="166"/>
    </location>
    <ligand>
        <name>S-adenosyl-L-methionine</name>
        <dbReference type="ChEBI" id="CHEBI:59789"/>
    </ligand>
</feature>
<proteinExistence type="inferred from homology"/>
<dbReference type="EC" id="2.1.1.-"/>
<dbReference type="EMBL" id="CP000820">
    <property type="protein sequence ID" value="ABW14294.1"/>
    <property type="status" value="ALT_FRAME"/>
    <property type="molecule type" value="Genomic_DNA"/>
</dbReference>
<dbReference type="SMR" id="A8LHA4"/>
<dbReference type="KEGG" id="fre:Franean1_4929"/>
<dbReference type="eggNOG" id="COG3315">
    <property type="taxonomic scope" value="Bacteria"/>
</dbReference>
<dbReference type="HOGENOM" id="CLU_056160_2_0_11"/>
<dbReference type="GO" id="GO:0008168">
    <property type="term" value="F:methyltransferase activity"/>
    <property type="evidence" value="ECO:0007669"/>
    <property type="project" value="UniProtKB-KW"/>
</dbReference>
<dbReference type="GO" id="GO:0032259">
    <property type="term" value="P:methylation"/>
    <property type="evidence" value="ECO:0007669"/>
    <property type="project" value="UniProtKB-KW"/>
</dbReference>
<dbReference type="Gene3D" id="3.40.50.150">
    <property type="entry name" value="Vaccinia Virus protein VP39"/>
    <property type="match status" value="1"/>
</dbReference>
<dbReference type="InterPro" id="IPR007213">
    <property type="entry name" value="Ppm1/Ppm2/Tcmp"/>
</dbReference>
<dbReference type="InterPro" id="IPR029063">
    <property type="entry name" value="SAM-dependent_MTases_sf"/>
</dbReference>
<dbReference type="InterPro" id="IPR011610">
    <property type="entry name" value="SAM_mthyl_Trfase_ML2640-like"/>
</dbReference>
<dbReference type="NCBIfam" id="TIGR00027">
    <property type="entry name" value="mthyl_TIGR00027"/>
    <property type="match status" value="1"/>
</dbReference>
<dbReference type="PANTHER" id="PTHR43619">
    <property type="entry name" value="S-ADENOSYL-L-METHIONINE-DEPENDENT METHYLTRANSFERASE YKTD-RELATED"/>
    <property type="match status" value="1"/>
</dbReference>
<dbReference type="PANTHER" id="PTHR43619:SF2">
    <property type="entry name" value="S-ADENOSYL-L-METHIONINE-DEPENDENT METHYLTRANSFERASES SUPERFAMILY PROTEIN"/>
    <property type="match status" value="1"/>
</dbReference>
<dbReference type="Pfam" id="PF04072">
    <property type="entry name" value="LCM"/>
    <property type="match status" value="1"/>
</dbReference>
<dbReference type="SUPFAM" id="SSF53335">
    <property type="entry name" value="S-adenosyl-L-methionine-dependent methyltransferases"/>
    <property type="match status" value="1"/>
</dbReference>
<keyword id="KW-0489">Methyltransferase</keyword>
<keyword id="KW-0949">S-adenosyl-L-methionine</keyword>
<keyword id="KW-0808">Transferase</keyword>